<sequence>MSNPRSLEEEKYDMSGARLALILCVTKAREGSEEDLDALEHMFRQLRFESTMKRDPTAEQFQEELEKFQQAIDSREDPVSCAFVVLMAHGREGFLKGEDGEMVKLENLFEALNNKNCQALRAKPKVYIIQACRGEQRDPGETVGGDEIVMVIKDSPQTIPTYTDALHVYSTVEGYIAYRHDQKGSCFIQTLVDVFTKRKGHILELLTEVTRRMAEAELVQEGKARKTNPEIQSTLRKRLYLQ</sequence>
<accession>P31944</accession>
<accession>O95823</accession>
<accession>Q3SYC9</accession>
<gene>
    <name type="primary">CASP14</name>
</gene>
<feature type="chain" id="PRO_0000432793" description="Caspase-14 subunit p20, intermediate form">
    <location>
        <begin position="1"/>
        <end position="178"/>
    </location>
</feature>
<feature type="propeptide" id="PRO_0000004652" evidence="8">
    <location>
        <begin position="1"/>
        <end position="5"/>
    </location>
</feature>
<feature type="chain" id="PRO_0000432794" description="Caspase-14 subunit p17, mature form">
    <location>
        <begin position="6"/>
        <end position="146"/>
    </location>
</feature>
<feature type="propeptide" id="PRO_0000432795" evidence="8">
    <location>
        <begin position="147"/>
        <end position="152"/>
    </location>
</feature>
<feature type="chain" id="PRO_0000004654" description="Caspase-14 subunit p10, mature form">
    <location>
        <begin position="153"/>
        <end position="242"/>
    </location>
</feature>
<feature type="chain" id="PRO_0000432796" description="Caspase-14 subunit p8, intermediate form">
    <location>
        <begin position="179"/>
        <end position="242"/>
    </location>
</feature>
<feature type="active site" evidence="2">
    <location>
        <position position="89"/>
    </location>
</feature>
<feature type="active site" evidence="2">
    <location>
        <position position="132"/>
    </location>
</feature>
<comment type="function">
    <text evidence="1 5 6 7 8 9 10 15">Non-apoptotic caspase involved in epidermal differentiation. Is the predominant caspase in epidermal stratum corneum (PubMed:15556625). Seems to play a role in keratinocyte differentiation and is required for cornification. Regulates maturation of the epidermis by proteolytically processing filaggrin (By similarity). In vitro has a preference for the substrate [WY]-X-X-D motif and is active on the synthetic caspase substrate WEHD-ACF (PubMed:16854378, PubMed:19960512). Involved in processing of prosaposin in the epidermis (By similarity). May be involved in retinal pigment epithelium cell barrier function (PubMed:25121097). Involved in DNA degradation in differentiated keratinocytes probably by cleaving DFFA/ICAD leading to liberation of DFFB/CAD (PubMed:24743736).</text>
</comment>
<comment type="activity regulation">
    <text evidence="8">Inhibited by caspase-1 inhibitor YVAD-FMK and the pan-caspase inhibitor VAD-FMK.</text>
</comment>
<comment type="subunit">
    <text evidence="4 8 9">Heterodimer of a large and a small subunit, both processed from the precursor; the mature active form is a p17/p10 dimer and the intermediate form a p20/p8 dimer.</text>
</comment>
<comment type="interaction">
    <interactant intactId="EBI-2510738">
        <id>P31944</id>
    </interactant>
    <interactant intactId="EBI-748397">
        <id>P50222</id>
        <label>MEOX2</label>
    </interactant>
    <organismsDiffer>false</organismsDiffer>
    <experiments>3</experiments>
</comment>
<comment type="interaction">
    <interactant intactId="EBI-2510738">
        <id>P31944</id>
    </interactant>
    <interactant intactId="EBI-716699">
        <id>P07602</id>
        <label>PSAP</label>
    </interactant>
    <organismsDiffer>false</organismsDiffer>
    <experiments>3</experiments>
</comment>
<comment type="subcellular location">
    <subcellularLocation>
        <location evidence="3 4 9">Cytoplasm</location>
    </subcellularLocation>
    <subcellularLocation>
        <location evidence="3">Nucleus</location>
    </subcellularLocation>
</comment>
<comment type="tissue specificity">
    <text evidence="3 6 9">Expressed in keratinocytes of adult skin suprabasal layers (from spinous layers to the stratum granulosum and stratum corneum) (at protein level). Expressed in keratinocytes of hair shaft and sebaceous glands (at protein level). In psoriatic skin only expressed at very low levels (PubMed:11175259). The p17/10 mature form is expressed in epidermis stratum corneum, the p20/p8 intermediate form in epidermis upper granular cells of the stratum granulosum (PubMed:22825846).</text>
</comment>
<comment type="induction">
    <text evidence="3 11">In undifferentiated keratinocytes under postconfluency growth conditions (in vitro) (PubMed:11175259). By high glucose in retinal pigment epithelia cells (PubMed:25121097).</text>
</comment>
<comment type="PTM">
    <text evidence="8 9 14">Maturation by proteolytic processing appears to be a two-step process. The precursor is processed by KLK7 to yield the p20/p8 intermediate form which acts on the precursor to yield the p17/p10 mature form (PubMed:22825846). Initially, cleavage between Ile-152 and Lys-153 has been proposed to yield the large and small subunits of the active enzyme (PubMed:12200134).</text>
</comment>
<comment type="disease" evidence="12">
    <disease id="DI-04921">
        <name>Ichthyosis, congenital, autosomal recessive 12</name>
        <acronym>ARCI12</acronym>
        <description>A form of autosomal recessive congenital ichthyosis, a disorder of keratinization with abnormal differentiation and desquamation of the epidermis, resulting in abnormal skin scaling over the whole body. The main skin phenotypes are lamellar ichthyosis (LI) and non-bullous congenital ichthyosiform erythroderma (NCIE), although phenotypic overlap within the same patient or among patients from the same family can occur. Lamellar ichthyosis is a condition often associated with an embedment in a collodion-like membrane at birth; skin scales later develop, covering the entire body surface. Non-bullous congenital ichthyosiform erythroderma characterized by fine whitish scaling on an erythrodermal background; larger brownish scales are present on the buttocks, neck and legs.</description>
        <dbReference type="MIM" id="617320"/>
    </disease>
    <text>The disease is caused by variants affecting the gene represented in this entry.</text>
</comment>
<comment type="miscellaneous">
    <text evidence="5 9">Expressed in bacteria requires high concentrations of kosmotropic salts to be activated (PubMed:15301553). The mature and the intermediate form differ in activity towards synthetic caspase substrates: the p17/p10 mature form but not the p20/p8 intermediate form is active on WEHD-MCA; p20/p8 is active on a number of other caspase substrates without any marked preference (VEID-AFC, DEVD-AFC, LEVD-AFC and LEHD-AFC) (PubMed:22825846).</text>
</comment>
<comment type="similarity">
    <text evidence="13">Belongs to the peptidase C14A family.</text>
</comment>
<keyword id="KW-0963">Cytoplasm</keyword>
<keyword id="KW-0221">Differentiation</keyword>
<keyword id="KW-0903">Direct protein sequencing</keyword>
<keyword id="KW-0378">Hydrolase</keyword>
<keyword id="KW-0977">Ichthyosis</keyword>
<keyword id="KW-0539">Nucleus</keyword>
<keyword id="KW-0645">Protease</keyword>
<keyword id="KW-1267">Proteomics identification</keyword>
<keyword id="KW-1185">Reference proteome</keyword>
<keyword id="KW-0788">Thiol protease</keyword>
<keyword id="KW-0865">Zymogen</keyword>
<reference key="1">
    <citation type="journal article" date="2000" name="Biochem. Biophys. Res. Commun.">
        <title>Caspase-14: analysis of gene structure and mRNA expression during keratinocyte differentiation.</title>
        <authorList>
            <person name="Eckhart L."/>
            <person name="Ban J."/>
            <person name="Fischer H."/>
            <person name="Tschachler E."/>
        </authorList>
    </citation>
    <scope>NUCLEOTIDE SEQUENCE [MRNA]</scope>
</reference>
<reference key="2">
    <citation type="journal article" date="2002" name="Cell Death Differ.">
        <title>Expression and transcriptional regulation of caspase-14 in simple and complex epithelia.</title>
        <authorList>
            <person name="Pistritto G."/>
            <person name="Jost M."/>
            <person name="Srinivasula S.M."/>
            <person name="Baffa R."/>
            <person name="Poyet J.-L."/>
            <person name="Kari C."/>
            <person name="Lazebnik Y."/>
            <person name="Rodeck U."/>
            <person name="Alnemri E.S."/>
        </authorList>
    </citation>
    <scope>NUCLEOTIDE SEQUENCE [MRNA]</scope>
    <source>
        <tissue>Brain</tissue>
    </source>
</reference>
<reference key="3">
    <citation type="journal article" date="2004" name="Genome Res.">
        <title>The status, quality, and expansion of the NIH full-length cDNA project: the Mammalian Gene Collection (MGC).</title>
        <authorList>
            <consortium name="The MGC Project Team"/>
        </authorList>
    </citation>
    <scope>NUCLEOTIDE SEQUENCE [LARGE SCALE MRNA]</scope>
</reference>
<reference key="4">
    <citation type="journal article" date="1992" name="Electrophoresis">
        <title>Microsequences of 145 proteins recorded in the two-dimensional gel protein database of normal human epidermal keratinocytes.</title>
        <authorList>
            <person name="Rasmussen H.H."/>
            <person name="van Damme J."/>
            <person name="Puype M."/>
            <person name="Gesser B."/>
            <person name="Celis J.E."/>
            <person name="Vandekerckhove J."/>
        </authorList>
    </citation>
    <scope>PROTEIN SEQUENCE OF 68-74; 137-147 AND 154-162</scope>
    <source>
        <tissue>Keratinocyte</tissue>
    </source>
</reference>
<reference key="5">
    <citation type="journal article" date="2000" name="Cell Death Differ.">
        <title>Epidermal differentiation does not involve the pro-apoptotic executioner caspases, but is associated with caspase-14 induction and processing.</title>
        <authorList>
            <person name="Lippens S."/>
            <person name="Kockx M."/>
            <person name="Knaapen M."/>
            <person name="Mortier L."/>
            <person name="Polakowska R."/>
            <person name="Verheyen A."/>
            <person name="Garmyn M."/>
            <person name="Zwijsen A."/>
            <person name="Formstecher P."/>
            <person name="Huylebroeck D."/>
            <person name="Vandenabeele P."/>
            <person name="Declercq W."/>
        </authorList>
    </citation>
    <scope>SUBCELLULAR LOCATION</scope>
    <scope>TISSUE SPECIFICITY</scope>
    <scope>INDUCTION</scope>
</reference>
<reference key="6">
    <citation type="journal article" date="2002" name="Biochem. Biophys. Res. Commun.">
        <title>Processing of native caspase-14 occurs at an atypical cleavage site in normal epidermal differentiation.</title>
        <authorList>
            <person name="Chien A.J."/>
            <person name="Presland R.B."/>
            <person name="Kuechle M.K."/>
        </authorList>
    </citation>
    <scope>PROTEIN SEQUENCE OF 153-163</scope>
    <scope>PROTEOLYTIC PROCESSING</scope>
    <scope>SUBUNIT</scope>
    <scope>SUBCELLULAR LOCATION</scope>
</reference>
<reference key="7">
    <citation type="journal article" date="2004" name="Biochemistry">
        <title>Activation and substrate specificity of caspase-14.</title>
        <authorList>
            <person name="Mikolajczyk J."/>
            <person name="Scott F.L."/>
            <person name="Krajewski S."/>
            <person name="Sutherlin D.P."/>
            <person name="Salvesen G.S."/>
        </authorList>
    </citation>
    <scope>FUNCTION</scope>
</reference>
<reference key="8">
    <citation type="journal article" date="2004" name="FEBS Lett.">
        <title>Stratum corneum-derived caspase-14 is catalytically active.</title>
        <authorList>
            <person name="Fischer H."/>
            <person name="Stichenwirth M."/>
            <person name="Dockal M."/>
            <person name="Ghannadan M."/>
            <person name="Buchberger M."/>
            <person name="Bach J."/>
            <person name="Kapetanopoulos A."/>
            <person name="Declercq W."/>
            <person name="Tschachler E."/>
            <person name="Eckhart L."/>
        </authorList>
    </citation>
    <scope>FUNCTION</scope>
    <scope>TISSUE SPECIFICITY</scope>
</reference>
<reference key="9">
    <citation type="journal article" date="2006" name="Biochem. Biophys. Res. Commun.">
        <title>Expression and characterization of constitutively active human caspase-14.</title>
        <authorList>
            <person name="Park K."/>
            <person name="Kuechle M.K."/>
            <person name="Choe Y."/>
            <person name="Craik C.S."/>
            <person name="Lawrence O.T."/>
            <person name="Presland R.B."/>
        </authorList>
    </citation>
    <scope>FUNCTION</scope>
</reference>
<reference key="10">
    <citation type="journal article" date="2010" name="J. Cell. Biochem.">
        <title>Purification and characterization of active caspase-14 from human epidermis and development of the cleavage site-directed antibody.</title>
        <authorList>
            <person name="Hibino T."/>
            <person name="Fujita E."/>
            <person name="Tsuji Y."/>
            <person name="Nakanishi J."/>
            <person name="Iwaki H."/>
            <person name="Katagiri C."/>
            <person name="Momoi T."/>
        </authorList>
    </citation>
    <scope>PROTEOLYTIC PROCESSING</scope>
    <scope>SUBUNIT</scope>
    <scope>ACTIVITY REGULATION</scope>
    <scope>FUNCTION</scope>
</reference>
<reference key="11">
    <citation type="journal article" date="2012" name="J. Biol. Chem.">
        <title>Kallikrein-related peptidase-7 regulates caspase-14 maturation during keratinocyte terminal differentiation by generating an intermediate form.</title>
        <authorList>
            <person name="Yamamoto M."/>
            <person name="Miyai M."/>
            <person name="Matsumoto Y."/>
            <person name="Tsuboi R."/>
            <person name="Hibino T."/>
        </authorList>
    </citation>
    <scope>PROTEOLYTIC PROCESSING</scope>
    <scope>SUBCELLULAR LOCATION</scope>
    <scope>TISSUE SPECIFICITY</scope>
    <scope>SUBUNIT</scope>
    <scope>FUNCTION</scope>
</reference>
<reference key="12">
    <citation type="journal article" date="2014" name="Biomed. Res. Int.">
        <title>Caspase-14 expression impairs retinal pigment epithelium barrier function: potential role in diabetic macular edema.</title>
        <authorList>
            <person name="Beasley S."/>
            <person name="El-Sherbiny M."/>
            <person name="Megyerdi S."/>
            <person name="El-Shafey S."/>
            <person name="Choksi K."/>
            <person name="Kaddour-Djebbar I."/>
            <person name="Sheibani N."/>
            <person name="Hsu S."/>
            <person name="Al-Shabrawey M."/>
        </authorList>
    </citation>
    <scope>INDUCTION</scope>
    <scope>FUNCTION</scope>
</reference>
<reference key="13">
    <citation type="journal article" date="2014" name="Cell Death Dis.">
        <title>Multiple pathways are involved in DNA degradation during keratinocyte terminal differentiation.</title>
        <authorList>
            <person name="Yamamoto-Tanaka M."/>
            <person name="Makino T."/>
            <person name="Motoyama A."/>
            <person name="Miyai M."/>
            <person name="Tsuboi R."/>
            <person name="Hibino T."/>
        </authorList>
    </citation>
    <scope>FUNCTION</scope>
</reference>
<reference key="14">
    <citation type="journal article" date="2017" name="Acta Derm. Venereol.">
        <title>Whole-Exome-Sequencing reveals small deletions in CASP14 in patients with autosomal recessive inherited ichthyosis.</title>
        <authorList>
            <person name="Kirchmeier P."/>
            <person name="Zimmer A."/>
            <person name="Bouadjar B."/>
            <person name="Roesler B."/>
            <person name="Fischer J."/>
        </authorList>
    </citation>
    <scope>INVOLVEMENT IN ARCI12</scope>
</reference>
<organism>
    <name type="scientific">Homo sapiens</name>
    <name type="common">Human</name>
    <dbReference type="NCBI Taxonomy" id="9606"/>
    <lineage>
        <taxon>Eukaryota</taxon>
        <taxon>Metazoa</taxon>
        <taxon>Chordata</taxon>
        <taxon>Craniata</taxon>
        <taxon>Vertebrata</taxon>
        <taxon>Euteleostomi</taxon>
        <taxon>Mammalia</taxon>
        <taxon>Eutheria</taxon>
        <taxon>Euarchontoglires</taxon>
        <taxon>Primates</taxon>
        <taxon>Haplorrhini</taxon>
        <taxon>Catarrhini</taxon>
        <taxon>Hominidae</taxon>
        <taxon>Homo</taxon>
    </lineage>
</organism>
<name>CASPE_HUMAN</name>
<dbReference type="EC" id="3.4.22.-"/>
<dbReference type="EMBL" id="AF097874">
    <property type="protein sequence ID" value="AAD16173.1"/>
    <property type="molecule type" value="mRNA"/>
</dbReference>
<dbReference type="EMBL" id="BC069541">
    <property type="protein sequence ID" value="AAH69541.1"/>
    <property type="molecule type" value="mRNA"/>
</dbReference>
<dbReference type="EMBL" id="BC103868">
    <property type="protein sequence ID" value="AAI03869.1"/>
    <property type="molecule type" value="mRNA"/>
</dbReference>
<dbReference type="EMBL" id="BC103869">
    <property type="protein sequence ID" value="AAI03870.1"/>
    <property type="molecule type" value="mRNA"/>
</dbReference>
<dbReference type="CCDS" id="CCDS12323.1"/>
<dbReference type="PIR" id="JC7517">
    <property type="entry name" value="JC7517"/>
</dbReference>
<dbReference type="RefSeq" id="NP_036246.1">
    <property type="nucleotide sequence ID" value="NM_012114.3"/>
</dbReference>
<dbReference type="SMR" id="P31944"/>
<dbReference type="BioGRID" id="117116">
    <property type="interactions" value="207"/>
</dbReference>
<dbReference type="FunCoup" id="P31944">
    <property type="interactions" value="180"/>
</dbReference>
<dbReference type="IntAct" id="P31944">
    <property type="interactions" value="87"/>
</dbReference>
<dbReference type="MINT" id="P31944"/>
<dbReference type="STRING" id="9606.ENSP00000393417"/>
<dbReference type="BindingDB" id="P31944"/>
<dbReference type="ChEMBL" id="CHEMBL5991"/>
<dbReference type="GuidetoPHARMACOLOGY" id="1627"/>
<dbReference type="MEROPS" id="C14.018"/>
<dbReference type="GlyGen" id="P31944">
    <property type="glycosylation" value="1 site, 1 O-linked glycan (1 site)"/>
</dbReference>
<dbReference type="iPTMnet" id="P31944"/>
<dbReference type="PhosphoSitePlus" id="P31944"/>
<dbReference type="BioMuta" id="CASP14"/>
<dbReference type="DMDM" id="12231007"/>
<dbReference type="jPOST" id="P31944"/>
<dbReference type="MassIVE" id="P31944"/>
<dbReference type="PaxDb" id="9606-ENSP00000393417"/>
<dbReference type="PeptideAtlas" id="P31944"/>
<dbReference type="ProteomicsDB" id="54815"/>
<dbReference type="TopDownProteomics" id="P31944"/>
<dbReference type="Antibodypedia" id="4107">
    <property type="antibodies" value="483 antibodies from 45 providers"/>
</dbReference>
<dbReference type="DNASU" id="23581"/>
<dbReference type="Ensembl" id="ENST00000427043.4">
    <property type="protein sequence ID" value="ENSP00000393417.2"/>
    <property type="gene ID" value="ENSG00000105141.6"/>
</dbReference>
<dbReference type="GeneID" id="23581"/>
<dbReference type="KEGG" id="hsa:23581"/>
<dbReference type="MANE-Select" id="ENST00000427043.4">
    <property type="protein sequence ID" value="ENSP00000393417.2"/>
    <property type="RefSeq nucleotide sequence ID" value="NM_012114.3"/>
    <property type="RefSeq protein sequence ID" value="NP_036246.1"/>
</dbReference>
<dbReference type="UCSC" id="uc010dzv.3">
    <property type="organism name" value="human"/>
</dbReference>
<dbReference type="AGR" id="HGNC:1502"/>
<dbReference type="CTD" id="23581"/>
<dbReference type="DisGeNET" id="23581"/>
<dbReference type="GeneCards" id="CASP14"/>
<dbReference type="GeneReviews" id="CASP14"/>
<dbReference type="HGNC" id="HGNC:1502">
    <property type="gene designation" value="CASP14"/>
</dbReference>
<dbReference type="HPA" id="ENSG00000105141">
    <property type="expression patterns" value="Tissue enriched (skin)"/>
</dbReference>
<dbReference type="MalaCards" id="CASP14"/>
<dbReference type="MIM" id="605848">
    <property type="type" value="gene"/>
</dbReference>
<dbReference type="MIM" id="617320">
    <property type="type" value="phenotype"/>
</dbReference>
<dbReference type="neXtProt" id="NX_P31944"/>
<dbReference type="OpenTargets" id="ENSG00000105141"/>
<dbReference type="PharmGKB" id="PA26085"/>
<dbReference type="VEuPathDB" id="HostDB:ENSG00000105141"/>
<dbReference type="eggNOG" id="KOG3573">
    <property type="taxonomic scope" value="Eukaryota"/>
</dbReference>
<dbReference type="GeneTree" id="ENSGT00940000162117"/>
<dbReference type="HOGENOM" id="CLU_036904_2_2_1"/>
<dbReference type="InParanoid" id="P31944"/>
<dbReference type="OMA" id="REDPVSC"/>
<dbReference type="OrthoDB" id="6044770at2759"/>
<dbReference type="PAN-GO" id="P31944">
    <property type="GO annotations" value="2 GO annotations based on evolutionary models"/>
</dbReference>
<dbReference type="PhylomeDB" id="P31944"/>
<dbReference type="TreeFam" id="TF102023"/>
<dbReference type="BioCyc" id="MetaCyc:ENSG00000105141-MONOMER"/>
<dbReference type="PathwayCommons" id="P31944"/>
<dbReference type="Reactome" id="R-HSA-6809371">
    <property type="pathway name" value="Formation of the cornified envelope"/>
</dbReference>
<dbReference type="Reactome" id="R-HSA-9725554">
    <property type="pathway name" value="Differentiation of Keratinocytes in Interfollicular Epidermis in Mammalian Skin"/>
</dbReference>
<dbReference type="SignaLink" id="P31944"/>
<dbReference type="BioGRID-ORCS" id="23581">
    <property type="hits" value="13 hits in 1150 CRISPR screens"/>
</dbReference>
<dbReference type="ChiTaRS" id="CASP14">
    <property type="organism name" value="human"/>
</dbReference>
<dbReference type="GeneWiki" id="Caspase_14"/>
<dbReference type="GenomeRNAi" id="23581"/>
<dbReference type="Pharos" id="P31944">
    <property type="development level" value="Tchem"/>
</dbReference>
<dbReference type="PRO" id="PR:P31944"/>
<dbReference type="Proteomes" id="UP000005640">
    <property type="component" value="Chromosome 19"/>
</dbReference>
<dbReference type="RNAct" id="P31944">
    <property type="molecule type" value="protein"/>
</dbReference>
<dbReference type="Bgee" id="ENSG00000105141">
    <property type="expression patterns" value="Expressed in skin of abdomen and 77 other cell types or tissues"/>
</dbReference>
<dbReference type="ExpressionAtlas" id="P31944">
    <property type="expression patterns" value="baseline and differential"/>
</dbReference>
<dbReference type="GO" id="GO:0001533">
    <property type="term" value="C:cornified envelope"/>
    <property type="evidence" value="ECO:0007669"/>
    <property type="project" value="Ensembl"/>
</dbReference>
<dbReference type="GO" id="GO:0005737">
    <property type="term" value="C:cytoplasm"/>
    <property type="evidence" value="ECO:0000314"/>
    <property type="project" value="CACAO"/>
</dbReference>
<dbReference type="GO" id="GO:0005829">
    <property type="term" value="C:cytosol"/>
    <property type="evidence" value="ECO:0000314"/>
    <property type="project" value="HPA"/>
</dbReference>
<dbReference type="GO" id="GO:0045095">
    <property type="term" value="C:keratin filament"/>
    <property type="evidence" value="ECO:0007669"/>
    <property type="project" value="Ensembl"/>
</dbReference>
<dbReference type="GO" id="GO:0005739">
    <property type="term" value="C:mitochondrion"/>
    <property type="evidence" value="ECO:0000314"/>
    <property type="project" value="HPA"/>
</dbReference>
<dbReference type="GO" id="GO:0005654">
    <property type="term" value="C:nucleoplasm"/>
    <property type="evidence" value="ECO:0000314"/>
    <property type="project" value="HPA"/>
</dbReference>
<dbReference type="GO" id="GO:0005634">
    <property type="term" value="C:nucleus"/>
    <property type="evidence" value="ECO:0000314"/>
    <property type="project" value="CACAO"/>
</dbReference>
<dbReference type="GO" id="GO:0004197">
    <property type="term" value="F:cysteine-type endopeptidase activity"/>
    <property type="evidence" value="ECO:0000304"/>
    <property type="project" value="ProtInc"/>
</dbReference>
<dbReference type="GO" id="GO:0070268">
    <property type="term" value="P:cornification"/>
    <property type="evidence" value="ECO:0000304"/>
    <property type="project" value="UniProtKB"/>
</dbReference>
<dbReference type="GO" id="GO:0008544">
    <property type="term" value="P:epidermis development"/>
    <property type="evidence" value="ECO:0000304"/>
    <property type="project" value="ProtInc"/>
</dbReference>
<dbReference type="GO" id="GO:0031424">
    <property type="term" value="P:keratinization"/>
    <property type="evidence" value="ECO:0000304"/>
    <property type="project" value="UniProtKB"/>
</dbReference>
<dbReference type="GO" id="GO:0043525">
    <property type="term" value="P:positive regulation of neuron apoptotic process"/>
    <property type="evidence" value="ECO:0000318"/>
    <property type="project" value="GO_Central"/>
</dbReference>
<dbReference type="GO" id="GO:0006508">
    <property type="term" value="P:proteolysis"/>
    <property type="evidence" value="ECO:0007669"/>
    <property type="project" value="UniProtKB-KW"/>
</dbReference>
<dbReference type="CDD" id="cd00032">
    <property type="entry name" value="CASc"/>
    <property type="match status" value="1"/>
</dbReference>
<dbReference type="FunFam" id="3.40.50.1460:FF:000015">
    <property type="entry name" value="Caspase 14"/>
    <property type="match status" value="1"/>
</dbReference>
<dbReference type="Gene3D" id="3.40.50.1460">
    <property type="match status" value="1"/>
</dbReference>
<dbReference type="InterPro" id="IPR029030">
    <property type="entry name" value="Caspase-like_dom_sf"/>
</dbReference>
<dbReference type="InterPro" id="IPR033139">
    <property type="entry name" value="Caspase_cys_AS"/>
</dbReference>
<dbReference type="InterPro" id="IPR002398">
    <property type="entry name" value="Pept_C14"/>
</dbReference>
<dbReference type="InterPro" id="IPR011600">
    <property type="entry name" value="Pept_C14_caspase"/>
</dbReference>
<dbReference type="InterPro" id="IPR002138">
    <property type="entry name" value="Pept_C14_p10"/>
</dbReference>
<dbReference type="InterPro" id="IPR001309">
    <property type="entry name" value="Pept_C14_p20"/>
</dbReference>
<dbReference type="InterPro" id="IPR015917">
    <property type="entry name" value="Pept_C14A"/>
</dbReference>
<dbReference type="PANTHER" id="PTHR10454">
    <property type="entry name" value="CASPASE"/>
    <property type="match status" value="1"/>
</dbReference>
<dbReference type="PANTHER" id="PTHR10454:SF131">
    <property type="entry name" value="CASPASE-14"/>
    <property type="match status" value="1"/>
</dbReference>
<dbReference type="Pfam" id="PF00656">
    <property type="entry name" value="Peptidase_C14"/>
    <property type="match status" value="1"/>
</dbReference>
<dbReference type="PRINTS" id="PR00376">
    <property type="entry name" value="IL1BCENZYME"/>
</dbReference>
<dbReference type="SMART" id="SM00115">
    <property type="entry name" value="CASc"/>
    <property type="match status" value="1"/>
</dbReference>
<dbReference type="SUPFAM" id="SSF52129">
    <property type="entry name" value="Caspase-like"/>
    <property type="match status" value="1"/>
</dbReference>
<dbReference type="PROSITE" id="PS01122">
    <property type="entry name" value="CASPASE_CYS"/>
    <property type="match status" value="1"/>
</dbReference>
<dbReference type="PROSITE" id="PS50207">
    <property type="entry name" value="CASPASE_P10"/>
    <property type="match status" value="1"/>
</dbReference>
<dbReference type="PROSITE" id="PS50208">
    <property type="entry name" value="CASPASE_P20"/>
    <property type="match status" value="1"/>
</dbReference>
<protein>
    <recommendedName>
        <fullName>Caspase-14</fullName>
        <shortName>CASP-14</shortName>
        <ecNumber>3.4.22.-</ecNumber>
    </recommendedName>
    <component>
        <recommendedName>
            <fullName>Caspase-14 subunit p17, mature form</fullName>
        </recommendedName>
    </component>
    <component>
        <recommendedName>
            <fullName>Caspase-14 subunit p10, mature form</fullName>
        </recommendedName>
    </component>
    <component>
        <recommendedName>
            <fullName>Caspase-14 subunit p20, intermediate form</fullName>
        </recommendedName>
    </component>
    <component>
        <recommendedName>
            <fullName>Caspase-14 subunit p8, intermediate form</fullName>
        </recommendedName>
    </component>
</protein>
<evidence type="ECO:0000250" key="1">
    <source>
        <dbReference type="UniProtKB" id="O89094"/>
    </source>
</evidence>
<evidence type="ECO:0000250" key="2">
    <source>
        <dbReference type="UniProtKB" id="P29466"/>
    </source>
</evidence>
<evidence type="ECO:0000269" key="3">
    <source>
    </source>
</evidence>
<evidence type="ECO:0000269" key="4">
    <source>
    </source>
</evidence>
<evidence type="ECO:0000269" key="5">
    <source>
    </source>
</evidence>
<evidence type="ECO:0000269" key="6">
    <source>
    </source>
</evidence>
<evidence type="ECO:0000269" key="7">
    <source>
    </source>
</evidence>
<evidence type="ECO:0000269" key="8">
    <source>
    </source>
</evidence>
<evidence type="ECO:0000269" key="9">
    <source>
    </source>
</evidence>
<evidence type="ECO:0000269" key="10">
    <source>
    </source>
</evidence>
<evidence type="ECO:0000269" key="11">
    <source>
    </source>
</evidence>
<evidence type="ECO:0000269" key="12">
    <source>
    </source>
</evidence>
<evidence type="ECO:0000305" key="13"/>
<evidence type="ECO:0000305" key="14">
    <source>
    </source>
</evidence>
<evidence type="ECO:0000305" key="15">
    <source>
    </source>
</evidence>
<proteinExistence type="evidence at protein level"/>